<organism>
    <name type="scientific">Corynebacterium diphtheriae (strain ATCC 700971 / NCTC 13129 / Biotype gravis)</name>
    <dbReference type="NCBI Taxonomy" id="257309"/>
    <lineage>
        <taxon>Bacteria</taxon>
        <taxon>Bacillati</taxon>
        <taxon>Actinomycetota</taxon>
        <taxon>Actinomycetes</taxon>
        <taxon>Mycobacteriales</taxon>
        <taxon>Corynebacteriaceae</taxon>
        <taxon>Corynebacterium</taxon>
    </lineage>
</organism>
<dbReference type="EC" id="6.3.5.7" evidence="1"/>
<dbReference type="EMBL" id="BX248357">
    <property type="protein sequence ID" value="CAE49603.1"/>
    <property type="molecule type" value="Genomic_DNA"/>
</dbReference>
<dbReference type="RefSeq" id="WP_010934792.1">
    <property type="nucleotide sequence ID" value="NC_002935.2"/>
</dbReference>
<dbReference type="SMR" id="Q6NHQ1"/>
<dbReference type="STRING" id="257309.DIP1080"/>
<dbReference type="GeneID" id="29422107"/>
<dbReference type="KEGG" id="cdi:DIP1080"/>
<dbReference type="HOGENOM" id="CLU_009600_0_3_11"/>
<dbReference type="Proteomes" id="UP000002198">
    <property type="component" value="Chromosome"/>
</dbReference>
<dbReference type="GO" id="GO:0030956">
    <property type="term" value="C:glutamyl-tRNA(Gln) amidotransferase complex"/>
    <property type="evidence" value="ECO:0007669"/>
    <property type="project" value="InterPro"/>
</dbReference>
<dbReference type="GO" id="GO:0005524">
    <property type="term" value="F:ATP binding"/>
    <property type="evidence" value="ECO:0007669"/>
    <property type="project" value="UniProtKB-KW"/>
</dbReference>
<dbReference type="GO" id="GO:0050567">
    <property type="term" value="F:glutaminyl-tRNA synthase (glutamine-hydrolyzing) activity"/>
    <property type="evidence" value="ECO:0007669"/>
    <property type="project" value="UniProtKB-UniRule"/>
</dbReference>
<dbReference type="GO" id="GO:0006412">
    <property type="term" value="P:translation"/>
    <property type="evidence" value="ECO:0007669"/>
    <property type="project" value="UniProtKB-UniRule"/>
</dbReference>
<dbReference type="Gene3D" id="3.90.1300.10">
    <property type="entry name" value="Amidase signature (AS) domain"/>
    <property type="match status" value="1"/>
</dbReference>
<dbReference type="HAMAP" id="MF_00120">
    <property type="entry name" value="GatA"/>
    <property type="match status" value="1"/>
</dbReference>
<dbReference type="InterPro" id="IPR000120">
    <property type="entry name" value="Amidase"/>
</dbReference>
<dbReference type="InterPro" id="IPR020556">
    <property type="entry name" value="Amidase_CS"/>
</dbReference>
<dbReference type="InterPro" id="IPR023631">
    <property type="entry name" value="Amidase_dom"/>
</dbReference>
<dbReference type="InterPro" id="IPR036928">
    <property type="entry name" value="AS_sf"/>
</dbReference>
<dbReference type="InterPro" id="IPR004412">
    <property type="entry name" value="GatA"/>
</dbReference>
<dbReference type="NCBIfam" id="TIGR00132">
    <property type="entry name" value="gatA"/>
    <property type="match status" value="1"/>
</dbReference>
<dbReference type="PANTHER" id="PTHR11895:SF151">
    <property type="entry name" value="GLUTAMYL-TRNA(GLN) AMIDOTRANSFERASE SUBUNIT A"/>
    <property type="match status" value="1"/>
</dbReference>
<dbReference type="PANTHER" id="PTHR11895">
    <property type="entry name" value="TRANSAMIDASE"/>
    <property type="match status" value="1"/>
</dbReference>
<dbReference type="Pfam" id="PF01425">
    <property type="entry name" value="Amidase"/>
    <property type="match status" value="1"/>
</dbReference>
<dbReference type="SUPFAM" id="SSF75304">
    <property type="entry name" value="Amidase signature (AS) enzymes"/>
    <property type="match status" value="1"/>
</dbReference>
<dbReference type="PROSITE" id="PS00571">
    <property type="entry name" value="AMIDASES"/>
    <property type="match status" value="1"/>
</dbReference>
<sequence>MNKYLVPDSGLTSLSAAELAEKIHSREVTSREVTQAHLDRINDVDGTLHAFLHVGVEEALAAADAVDESLDKGEAPASALAGVPLALKDVFVTTDAPTTCASKMLEGYVAPYDATVTKKIREAGIPILGKTNMDEFAMGSSTENSAYGPTLNPWDIERTPGGSGGGTSAALASGEAPLGIGTDTGGSIRQPAALTNTVGVKPTYGTVSRYGLVACASSLDQGGPTARTVLDTALLHEVIAGHDKYDATSVNRAVAPVVAAAREGARGDLKGTKIGVVKQFDREGYQPGVLEQFHKSVEQLTAQGAEIVEVDCPHFDDALAAYYLILPCEVSSNLARFDGMRYGLREGDDGTHSAEEVMSLSRAAGFGPEVKRRIILGTYALSVGYYDAYYLQAQRVRTLIAQDFAVAYDKCDVLVSPTTPTTAFKLGEKVSDPLAMYNFDLCTLPLNLAGLCGMSLPSGLAPDSQLPTGLQIMAPAFQDDRLYKVGAAFEVGQK</sequence>
<evidence type="ECO:0000255" key="1">
    <source>
        <dbReference type="HAMAP-Rule" id="MF_00120"/>
    </source>
</evidence>
<name>GATA_CORDI</name>
<keyword id="KW-0067">ATP-binding</keyword>
<keyword id="KW-0436">Ligase</keyword>
<keyword id="KW-0547">Nucleotide-binding</keyword>
<keyword id="KW-0648">Protein biosynthesis</keyword>
<keyword id="KW-1185">Reference proteome</keyword>
<comment type="function">
    <text evidence="1">Allows the formation of correctly charged Gln-tRNA(Gln) through the transamidation of misacylated Glu-tRNA(Gln) in organisms which lack glutaminyl-tRNA synthetase. The reaction takes place in the presence of glutamine and ATP through an activated gamma-phospho-Glu-tRNA(Gln).</text>
</comment>
<comment type="catalytic activity">
    <reaction evidence="1">
        <text>L-glutamyl-tRNA(Gln) + L-glutamine + ATP + H2O = L-glutaminyl-tRNA(Gln) + L-glutamate + ADP + phosphate + H(+)</text>
        <dbReference type="Rhea" id="RHEA:17521"/>
        <dbReference type="Rhea" id="RHEA-COMP:9681"/>
        <dbReference type="Rhea" id="RHEA-COMP:9684"/>
        <dbReference type="ChEBI" id="CHEBI:15377"/>
        <dbReference type="ChEBI" id="CHEBI:15378"/>
        <dbReference type="ChEBI" id="CHEBI:29985"/>
        <dbReference type="ChEBI" id="CHEBI:30616"/>
        <dbReference type="ChEBI" id="CHEBI:43474"/>
        <dbReference type="ChEBI" id="CHEBI:58359"/>
        <dbReference type="ChEBI" id="CHEBI:78520"/>
        <dbReference type="ChEBI" id="CHEBI:78521"/>
        <dbReference type="ChEBI" id="CHEBI:456216"/>
        <dbReference type="EC" id="6.3.5.7"/>
    </reaction>
</comment>
<comment type="subunit">
    <text evidence="1">Heterotrimer of A, B and C subunits.</text>
</comment>
<comment type="similarity">
    <text evidence="1">Belongs to the amidase family. GatA subfamily.</text>
</comment>
<feature type="chain" id="PRO_0000241090" description="Glutamyl-tRNA(Gln) amidotransferase subunit A">
    <location>
        <begin position="1"/>
        <end position="494"/>
    </location>
</feature>
<feature type="active site" description="Charge relay system" evidence="1">
    <location>
        <position position="88"/>
    </location>
</feature>
<feature type="active site" description="Charge relay system" evidence="1">
    <location>
        <position position="163"/>
    </location>
</feature>
<feature type="active site" description="Acyl-ester intermediate" evidence="1">
    <location>
        <position position="187"/>
    </location>
</feature>
<gene>
    <name evidence="1" type="primary">gatA</name>
    <name type="ordered locus">DIP1080</name>
</gene>
<protein>
    <recommendedName>
        <fullName evidence="1">Glutamyl-tRNA(Gln) amidotransferase subunit A</fullName>
        <shortName evidence="1">Glu-ADT subunit A</shortName>
        <ecNumber evidence="1">6.3.5.7</ecNumber>
    </recommendedName>
</protein>
<proteinExistence type="inferred from homology"/>
<reference key="1">
    <citation type="journal article" date="2003" name="Nucleic Acids Res.">
        <title>The complete genome sequence and analysis of Corynebacterium diphtheriae NCTC13129.</title>
        <authorList>
            <person name="Cerdeno-Tarraga A.-M."/>
            <person name="Efstratiou A."/>
            <person name="Dover L.G."/>
            <person name="Holden M.T.G."/>
            <person name="Pallen M.J."/>
            <person name="Bentley S.D."/>
            <person name="Besra G.S."/>
            <person name="Churcher C.M."/>
            <person name="James K.D."/>
            <person name="De Zoysa A."/>
            <person name="Chillingworth T."/>
            <person name="Cronin A."/>
            <person name="Dowd L."/>
            <person name="Feltwell T."/>
            <person name="Hamlin N."/>
            <person name="Holroyd S."/>
            <person name="Jagels K."/>
            <person name="Moule S."/>
            <person name="Quail M.A."/>
            <person name="Rabbinowitsch E."/>
            <person name="Rutherford K.M."/>
            <person name="Thomson N.R."/>
            <person name="Unwin L."/>
            <person name="Whitehead S."/>
            <person name="Barrell B.G."/>
            <person name="Parkhill J."/>
        </authorList>
    </citation>
    <scope>NUCLEOTIDE SEQUENCE [LARGE SCALE GENOMIC DNA]</scope>
    <source>
        <strain>ATCC 700971 / NCTC 13129 / Biotype gravis</strain>
    </source>
</reference>
<accession>Q6NHQ1</accession>